<proteinExistence type="inferred from homology"/>
<comment type="function">
    <text evidence="1">Binds 23S rRNA and is also seen to make contacts with the A and possibly P site tRNAs.</text>
</comment>
<comment type="subunit">
    <text evidence="1">Part of the 50S ribosomal subunit.</text>
</comment>
<comment type="similarity">
    <text evidence="1">Belongs to the universal ribosomal protein uL16 family.</text>
</comment>
<gene>
    <name evidence="1" type="primary">rplP</name>
    <name type="ordered locus">cu0322</name>
</gene>
<sequence>MLIPKRVKFRRQHRPNRSGMSKGGNRVTFGDYGLQALEPTYITNRQIEAARIAINRHIKRGGKVWINIFPDRPLTQKPLGVRMGSGKGPVEKWVANVKPGRILFEMSYPDEQAAMEALRRAGAKLPCKVRIVKKEDQF</sequence>
<protein>
    <recommendedName>
        <fullName evidence="1">Large ribosomal subunit protein uL16</fullName>
    </recommendedName>
    <alternativeName>
        <fullName evidence="3">50S ribosomal protein L16</fullName>
    </alternativeName>
</protein>
<dbReference type="EMBL" id="AM942444">
    <property type="protein sequence ID" value="CAQ04282.1"/>
    <property type="molecule type" value="Genomic_DNA"/>
</dbReference>
<dbReference type="RefSeq" id="WP_012359582.1">
    <property type="nucleotide sequence ID" value="NC_010545.1"/>
</dbReference>
<dbReference type="SMR" id="B1VEU3"/>
<dbReference type="STRING" id="504474.cu0322"/>
<dbReference type="GeneID" id="60605125"/>
<dbReference type="KEGG" id="cur:cu0322"/>
<dbReference type="eggNOG" id="COG0197">
    <property type="taxonomic scope" value="Bacteria"/>
</dbReference>
<dbReference type="HOGENOM" id="CLU_078858_2_1_11"/>
<dbReference type="Proteomes" id="UP000001727">
    <property type="component" value="Chromosome"/>
</dbReference>
<dbReference type="GO" id="GO:0022625">
    <property type="term" value="C:cytosolic large ribosomal subunit"/>
    <property type="evidence" value="ECO:0007669"/>
    <property type="project" value="TreeGrafter"/>
</dbReference>
<dbReference type="GO" id="GO:0019843">
    <property type="term" value="F:rRNA binding"/>
    <property type="evidence" value="ECO:0007669"/>
    <property type="project" value="UniProtKB-UniRule"/>
</dbReference>
<dbReference type="GO" id="GO:0003735">
    <property type="term" value="F:structural constituent of ribosome"/>
    <property type="evidence" value="ECO:0007669"/>
    <property type="project" value="InterPro"/>
</dbReference>
<dbReference type="GO" id="GO:0000049">
    <property type="term" value="F:tRNA binding"/>
    <property type="evidence" value="ECO:0007669"/>
    <property type="project" value="UniProtKB-KW"/>
</dbReference>
<dbReference type="GO" id="GO:0006412">
    <property type="term" value="P:translation"/>
    <property type="evidence" value="ECO:0007669"/>
    <property type="project" value="UniProtKB-UniRule"/>
</dbReference>
<dbReference type="CDD" id="cd01433">
    <property type="entry name" value="Ribosomal_L16_L10e"/>
    <property type="match status" value="1"/>
</dbReference>
<dbReference type="FunFam" id="3.90.1170.10:FF:000001">
    <property type="entry name" value="50S ribosomal protein L16"/>
    <property type="match status" value="1"/>
</dbReference>
<dbReference type="Gene3D" id="3.90.1170.10">
    <property type="entry name" value="Ribosomal protein L10e/L16"/>
    <property type="match status" value="1"/>
</dbReference>
<dbReference type="HAMAP" id="MF_01342">
    <property type="entry name" value="Ribosomal_uL16"/>
    <property type="match status" value="1"/>
</dbReference>
<dbReference type="InterPro" id="IPR047873">
    <property type="entry name" value="Ribosomal_uL16"/>
</dbReference>
<dbReference type="InterPro" id="IPR000114">
    <property type="entry name" value="Ribosomal_uL16_bact-type"/>
</dbReference>
<dbReference type="InterPro" id="IPR020798">
    <property type="entry name" value="Ribosomal_uL16_CS"/>
</dbReference>
<dbReference type="InterPro" id="IPR016180">
    <property type="entry name" value="Ribosomal_uL16_dom"/>
</dbReference>
<dbReference type="InterPro" id="IPR036920">
    <property type="entry name" value="Ribosomal_uL16_sf"/>
</dbReference>
<dbReference type="NCBIfam" id="TIGR01164">
    <property type="entry name" value="rplP_bact"/>
    <property type="match status" value="1"/>
</dbReference>
<dbReference type="PANTHER" id="PTHR12220">
    <property type="entry name" value="50S/60S RIBOSOMAL PROTEIN L16"/>
    <property type="match status" value="1"/>
</dbReference>
<dbReference type="PANTHER" id="PTHR12220:SF13">
    <property type="entry name" value="LARGE RIBOSOMAL SUBUNIT PROTEIN UL16M"/>
    <property type="match status" value="1"/>
</dbReference>
<dbReference type="Pfam" id="PF00252">
    <property type="entry name" value="Ribosomal_L16"/>
    <property type="match status" value="1"/>
</dbReference>
<dbReference type="PRINTS" id="PR00060">
    <property type="entry name" value="RIBOSOMALL16"/>
</dbReference>
<dbReference type="SUPFAM" id="SSF54686">
    <property type="entry name" value="Ribosomal protein L16p/L10e"/>
    <property type="match status" value="1"/>
</dbReference>
<dbReference type="PROSITE" id="PS00586">
    <property type="entry name" value="RIBOSOMAL_L16_1"/>
    <property type="match status" value="1"/>
</dbReference>
<dbReference type="PROSITE" id="PS00701">
    <property type="entry name" value="RIBOSOMAL_L16_2"/>
    <property type="match status" value="1"/>
</dbReference>
<evidence type="ECO:0000255" key="1">
    <source>
        <dbReference type="HAMAP-Rule" id="MF_01342"/>
    </source>
</evidence>
<evidence type="ECO:0000256" key="2">
    <source>
        <dbReference type="SAM" id="MobiDB-lite"/>
    </source>
</evidence>
<evidence type="ECO:0000305" key="3"/>
<accession>B1VEU3</accession>
<organism>
    <name type="scientific">Corynebacterium urealyticum (strain ATCC 43042 / DSM 7109)</name>
    <dbReference type="NCBI Taxonomy" id="504474"/>
    <lineage>
        <taxon>Bacteria</taxon>
        <taxon>Bacillati</taxon>
        <taxon>Actinomycetota</taxon>
        <taxon>Actinomycetes</taxon>
        <taxon>Mycobacteriales</taxon>
        <taxon>Corynebacteriaceae</taxon>
        <taxon>Corynebacterium</taxon>
    </lineage>
</organism>
<keyword id="KW-1185">Reference proteome</keyword>
<keyword id="KW-0687">Ribonucleoprotein</keyword>
<keyword id="KW-0689">Ribosomal protein</keyword>
<keyword id="KW-0694">RNA-binding</keyword>
<keyword id="KW-0699">rRNA-binding</keyword>
<keyword id="KW-0820">tRNA-binding</keyword>
<name>RL16_CORU7</name>
<reference key="1">
    <citation type="journal article" date="2008" name="J. Biotechnol.">
        <title>The lifestyle of Corynebacterium urealyticum derived from its complete genome sequence established by pyrosequencing.</title>
        <authorList>
            <person name="Tauch A."/>
            <person name="Trost E."/>
            <person name="Tilker A."/>
            <person name="Ludewig U."/>
            <person name="Schneiker S."/>
            <person name="Goesmann A."/>
            <person name="Arnold W."/>
            <person name="Bekel T."/>
            <person name="Brinkrolf K."/>
            <person name="Brune I."/>
            <person name="Goetker S."/>
            <person name="Kalinowski J."/>
            <person name="Kamp P.-B."/>
            <person name="Lobo F.P."/>
            <person name="Viehoever P."/>
            <person name="Weisshaar B."/>
            <person name="Soriano F."/>
            <person name="Droege M."/>
            <person name="Puehler A."/>
        </authorList>
    </citation>
    <scope>NUCLEOTIDE SEQUENCE [LARGE SCALE GENOMIC DNA]</scope>
    <source>
        <strain>ATCC 43042 / DSM 7109</strain>
    </source>
</reference>
<feature type="chain" id="PRO_1000142952" description="Large ribosomal subunit protein uL16">
    <location>
        <begin position="1"/>
        <end position="138"/>
    </location>
</feature>
<feature type="region of interest" description="Disordered" evidence="2">
    <location>
        <begin position="1"/>
        <end position="25"/>
    </location>
</feature>
<feature type="compositionally biased region" description="Basic residues" evidence="2">
    <location>
        <begin position="1"/>
        <end position="16"/>
    </location>
</feature>